<protein>
    <recommendedName>
        <fullName evidence="1">Chaperone protein DnaJ</fullName>
    </recommendedName>
</protein>
<keyword id="KW-0143">Chaperone</keyword>
<keyword id="KW-0963">Cytoplasm</keyword>
<keyword id="KW-0235">DNA replication</keyword>
<keyword id="KW-0479">Metal-binding</keyword>
<keyword id="KW-1185">Reference proteome</keyword>
<keyword id="KW-0677">Repeat</keyword>
<keyword id="KW-0346">Stress response</keyword>
<keyword id="KW-0862">Zinc</keyword>
<keyword id="KW-0863">Zinc-finger</keyword>
<sequence>MATRIDYYESLEVSRTASQDELKKAFRKQAMRYHPDRNPGDDAAEQKFKEINEAYDVLKDEQKRAAYDRYGHDAFEGGMGGMGGGFGGGFAGAGGLGDIFDQMFGDMMGGRRDGGRRTGADVQVQVEITLMEAFTGVTKDVEVRTRVTCEACHGSGSADPKAGSSTCPTCHGAGKVRAQQGFFLVERPCPTCHGSGRTVANPCKVCHGTGTEAKTETISIDIPAGVEDGTRIRMAGKGEAGGEGVQPGDLYVHISVLSHDIFQRDGANIYCRVPLRMTQAALGTEVEVPVVDGGRSKVRIPAGTQTGETFRLRGKGFSVLRSSARGDMYIQVSVETPSHLTKRQRELLEEFEKEAGDDHAKGSPENSGFFAKVRDFFEGR</sequence>
<organism>
    <name type="scientific">Gluconobacter oxydans (strain 621H)</name>
    <name type="common">Gluconobacter suboxydans</name>
    <dbReference type="NCBI Taxonomy" id="290633"/>
    <lineage>
        <taxon>Bacteria</taxon>
        <taxon>Pseudomonadati</taxon>
        <taxon>Pseudomonadota</taxon>
        <taxon>Alphaproteobacteria</taxon>
        <taxon>Acetobacterales</taxon>
        <taxon>Acetobacteraceae</taxon>
        <taxon>Gluconobacter</taxon>
    </lineage>
</organism>
<evidence type="ECO:0000255" key="1">
    <source>
        <dbReference type="HAMAP-Rule" id="MF_01152"/>
    </source>
</evidence>
<feature type="chain" id="PRO_0000070792" description="Chaperone protein DnaJ">
    <location>
        <begin position="1"/>
        <end position="380"/>
    </location>
</feature>
<feature type="domain" description="J" evidence="1">
    <location>
        <begin position="6"/>
        <end position="71"/>
    </location>
</feature>
<feature type="repeat" description="CXXCXGXG motif">
    <location>
        <begin position="149"/>
        <end position="156"/>
    </location>
</feature>
<feature type="repeat" description="CXXCXGXG motif">
    <location>
        <begin position="167"/>
        <end position="174"/>
    </location>
</feature>
<feature type="repeat" description="CXXCXGXG motif">
    <location>
        <begin position="189"/>
        <end position="196"/>
    </location>
</feature>
<feature type="repeat" description="CXXCXGXG motif">
    <location>
        <begin position="203"/>
        <end position="210"/>
    </location>
</feature>
<feature type="zinc finger region" description="CR-type" evidence="1">
    <location>
        <begin position="136"/>
        <end position="215"/>
    </location>
</feature>
<feature type="binding site" evidence="1">
    <location>
        <position position="149"/>
    </location>
    <ligand>
        <name>Zn(2+)</name>
        <dbReference type="ChEBI" id="CHEBI:29105"/>
        <label>1</label>
    </ligand>
</feature>
<feature type="binding site" evidence="1">
    <location>
        <position position="152"/>
    </location>
    <ligand>
        <name>Zn(2+)</name>
        <dbReference type="ChEBI" id="CHEBI:29105"/>
        <label>1</label>
    </ligand>
</feature>
<feature type="binding site" evidence="1">
    <location>
        <position position="167"/>
    </location>
    <ligand>
        <name>Zn(2+)</name>
        <dbReference type="ChEBI" id="CHEBI:29105"/>
        <label>2</label>
    </ligand>
</feature>
<feature type="binding site" evidence="1">
    <location>
        <position position="170"/>
    </location>
    <ligand>
        <name>Zn(2+)</name>
        <dbReference type="ChEBI" id="CHEBI:29105"/>
        <label>2</label>
    </ligand>
</feature>
<feature type="binding site" evidence="1">
    <location>
        <position position="189"/>
    </location>
    <ligand>
        <name>Zn(2+)</name>
        <dbReference type="ChEBI" id="CHEBI:29105"/>
        <label>2</label>
    </ligand>
</feature>
<feature type="binding site" evidence="1">
    <location>
        <position position="192"/>
    </location>
    <ligand>
        <name>Zn(2+)</name>
        <dbReference type="ChEBI" id="CHEBI:29105"/>
        <label>2</label>
    </ligand>
</feature>
<feature type="binding site" evidence="1">
    <location>
        <position position="203"/>
    </location>
    <ligand>
        <name>Zn(2+)</name>
        <dbReference type="ChEBI" id="CHEBI:29105"/>
        <label>1</label>
    </ligand>
</feature>
<feature type="binding site" evidence="1">
    <location>
        <position position="206"/>
    </location>
    <ligand>
        <name>Zn(2+)</name>
        <dbReference type="ChEBI" id="CHEBI:29105"/>
        <label>1</label>
    </ligand>
</feature>
<dbReference type="EMBL" id="CP000009">
    <property type="protein sequence ID" value="AAW60632.1"/>
    <property type="molecule type" value="Genomic_DNA"/>
</dbReference>
<dbReference type="RefSeq" id="WP_011252428.1">
    <property type="nucleotide sequence ID" value="NC_006677.1"/>
</dbReference>
<dbReference type="SMR" id="Q5FSL4"/>
<dbReference type="STRING" id="290633.GOX0858"/>
<dbReference type="KEGG" id="gox:GOX0858"/>
<dbReference type="eggNOG" id="COG0484">
    <property type="taxonomic scope" value="Bacteria"/>
</dbReference>
<dbReference type="HOGENOM" id="CLU_017633_0_7_5"/>
<dbReference type="Proteomes" id="UP000006375">
    <property type="component" value="Chromosome"/>
</dbReference>
<dbReference type="GO" id="GO:0005737">
    <property type="term" value="C:cytoplasm"/>
    <property type="evidence" value="ECO:0007669"/>
    <property type="project" value="UniProtKB-SubCell"/>
</dbReference>
<dbReference type="GO" id="GO:0005524">
    <property type="term" value="F:ATP binding"/>
    <property type="evidence" value="ECO:0007669"/>
    <property type="project" value="InterPro"/>
</dbReference>
<dbReference type="GO" id="GO:0031072">
    <property type="term" value="F:heat shock protein binding"/>
    <property type="evidence" value="ECO:0007669"/>
    <property type="project" value="InterPro"/>
</dbReference>
<dbReference type="GO" id="GO:0051082">
    <property type="term" value="F:unfolded protein binding"/>
    <property type="evidence" value="ECO:0007669"/>
    <property type="project" value="UniProtKB-UniRule"/>
</dbReference>
<dbReference type="GO" id="GO:0008270">
    <property type="term" value="F:zinc ion binding"/>
    <property type="evidence" value="ECO:0007669"/>
    <property type="project" value="UniProtKB-UniRule"/>
</dbReference>
<dbReference type="GO" id="GO:0051085">
    <property type="term" value="P:chaperone cofactor-dependent protein refolding"/>
    <property type="evidence" value="ECO:0007669"/>
    <property type="project" value="TreeGrafter"/>
</dbReference>
<dbReference type="GO" id="GO:0006260">
    <property type="term" value="P:DNA replication"/>
    <property type="evidence" value="ECO:0007669"/>
    <property type="project" value="UniProtKB-KW"/>
</dbReference>
<dbReference type="GO" id="GO:0042026">
    <property type="term" value="P:protein refolding"/>
    <property type="evidence" value="ECO:0007669"/>
    <property type="project" value="TreeGrafter"/>
</dbReference>
<dbReference type="GO" id="GO:0009408">
    <property type="term" value="P:response to heat"/>
    <property type="evidence" value="ECO:0007669"/>
    <property type="project" value="InterPro"/>
</dbReference>
<dbReference type="CDD" id="cd06257">
    <property type="entry name" value="DnaJ"/>
    <property type="match status" value="1"/>
</dbReference>
<dbReference type="CDD" id="cd10747">
    <property type="entry name" value="DnaJ_C"/>
    <property type="match status" value="1"/>
</dbReference>
<dbReference type="CDD" id="cd10719">
    <property type="entry name" value="DnaJ_zf"/>
    <property type="match status" value="1"/>
</dbReference>
<dbReference type="FunFam" id="1.10.287.110:FF:000034">
    <property type="entry name" value="Chaperone protein DnaJ"/>
    <property type="match status" value="1"/>
</dbReference>
<dbReference type="FunFam" id="2.60.260.20:FF:000004">
    <property type="entry name" value="Molecular chaperone DnaJ"/>
    <property type="match status" value="1"/>
</dbReference>
<dbReference type="Gene3D" id="6.20.20.10">
    <property type="match status" value="2"/>
</dbReference>
<dbReference type="Gene3D" id="1.10.287.110">
    <property type="entry name" value="DnaJ domain"/>
    <property type="match status" value="1"/>
</dbReference>
<dbReference type="Gene3D" id="2.60.260.20">
    <property type="entry name" value="Urease metallochaperone UreE, N-terminal domain"/>
    <property type="match status" value="2"/>
</dbReference>
<dbReference type="HAMAP" id="MF_01152">
    <property type="entry name" value="DnaJ"/>
    <property type="match status" value="1"/>
</dbReference>
<dbReference type="InterPro" id="IPR012724">
    <property type="entry name" value="DnaJ"/>
</dbReference>
<dbReference type="InterPro" id="IPR002939">
    <property type="entry name" value="DnaJ_C"/>
</dbReference>
<dbReference type="InterPro" id="IPR001623">
    <property type="entry name" value="DnaJ_domain"/>
</dbReference>
<dbReference type="InterPro" id="IPR018253">
    <property type="entry name" value="DnaJ_domain_CS"/>
</dbReference>
<dbReference type="InterPro" id="IPR008971">
    <property type="entry name" value="HSP40/DnaJ_pept-bd"/>
</dbReference>
<dbReference type="InterPro" id="IPR001305">
    <property type="entry name" value="HSP_DnaJ_Cys-rich_dom"/>
</dbReference>
<dbReference type="InterPro" id="IPR036410">
    <property type="entry name" value="HSP_DnaJ_Cys-rich_dom_sf"/>
</dbReference>
<dbReference type="InterPro" id="IPR036869">
    <property type="entry name" value="J_dom_sf"/>
</dbReference>
<dbReference type="NCBIfam" id="TIGR02349">
    <property type="entry name" value="DnaJ_bact"/>
    <property type="match status" value="1"/>
</dbReference>
<dbReference type="NCBIfam" id="NF008035">
    <property type="entry name" value="PRK10767.1"/>
    <property type="match status" value="1"/>
</dbReference>
<dbReference type="PANTHER" id="PTHR43096:SF48">
    <property type="entry name" value="CHAPERONE PROTEIN DNAJ"/>
    <property type="match status" value="1"/>
</dbReference>
<dbReference type="PANTHER" id="PTHR43096">
    <property type="entry name" value="DNAJ HOMOLOG 1, MITOCHONDRIAL-RELATED"/>
    <property type="match status" value="1"/>
</dbReference>
<dbReference type="Pfam" id="PF00226">
    <property type="entry name" value="DnaJ"/>
    <property type="match status" value="1"/>
</dbReference>
<dbReference type="Pfam" id="PF01556">
    <property type="entry name" value="DnaJ_C"/>
    <property type="match status" value="1"/>
</dbReference>
<dbReference type="Pfam" id="PF00684">
    <property type="entry name" value="DnaJ_CXXCXGXG"/>
    <property type="match status" value="1"/>
</dbReference>
<dbReference type="PRINTS" id="PR00625">
    <property type="entry name" value="JDOMAIN"/>
</dbReference>
<dbReference type="SMART" id="SM00271">
    <property type="entry name" value="DnaJ"/>
    <property type="match status" value="1"/>
</dbReference>
<dbReference type="SUPFAM" id="SSF46565">
    <property type="entry name" value="Chaperone J-domain"/>
    <property type="match status" value="1"/>
</dbReference>
<dbReference type="SUPFAM" id="SSF57938">
    <property type="entry name" value="DnaJ/Hsp40 cysteine-rich domain"/>
    <property type="match status" value="1"/>
</dbReference>
<dbReference type="SUPFAM" id="SSF49493">
    <property type="entry name" value="HSP40/DnaJ peptide-binding domain"/>
    <property type="match status" value="2"/>
</dbReference>
<dbReference type="PROSITE" id="PS00636">
    <property type="entry name" value="DNAJ_1"/>
    <property type="match status" value="1"/>
</dbReference>
<dbReference type="PROSITE" id="PS50076">
    <property type="entry name" value="DNAJ_2"/>
    <property type="match status" value="1"/>
</dbReference>
<dbReference type="PROSITE" id="PS51188">
    <property type="entry name" value="ZF_CR"/>
    <property type="match status" value="1"/>
</dbReference>
<accession>Q5FSL4</accession>
<gene>
    <name evidence="1" type="primary">dnaJ</name>
    <name type="ordered locus">GOX0858</name>
</gene>
<comment type="function">
    <text evidence="1">Participates actively in the response to hyperosmotic and heat shock by preventing the aggregation of stress-denatured proteins and by disaggregating proteins, also in an autonomous, DnaK-independent fashion. Unfolded proteins bind initially to DnaJ; upon interaction with the DnaJ-bound protein, DnaK hydrolyzes its bound ATP, resulting in the formation of a stable complex. GrpE releases ADP from DnaK; ATP binding to DnaK triggers the release of the substrate protein, thus completing the reaction cycle. Several rounds of ATP-dependent interactions between DnaJ, DnaK and GrpE are required for fully efficient folding. Also involved, together with DnaK and GrpE, in the DNA replication of plasmids through activation of initiation proteins.</text>
</comment>
<comment type="cofactor">
    <cofactor evidence="1">
        <name>Zn(2+)</name>
        <dbReference type="ChEBI" id="CHEBI:29105"/>
    </cofactor>
    <text evidence="1">Binds 2 Zn(2+) ions per monomer.</text>
</comment>
<comment type="subunit">
    <text evidence="1">Homodimer.</text>
</comment>
<comment type="subcellular location">
    <subcellularLocation>
        <location evidence="1">Cytoplasm</location>
    </subcellularLocation>
</comment>
<comment type="domain">
    <text evidence="1">The J domain is necessary and sufficient to stimulate DnaK ATPase activity. Zinc center 1 plays an important role in the autonomous, DnaK-independent chaperone activity of DnaJ. Zinc center 2 is essential for interaction with DnaK and for DnaJ activity.</text>
</comment>
<comment type="similarity">
    <text evidence="1">Belongs to the DnaJ family.</text>
</comment>
<reference key="1">
    <citation type="journal article" date="2005" name="Nat. Biotechnol.">
        <title>Complete genome sequence of the acetic acid bacterium Gluconobacter oxydans.</title>
        <authorList>
            <person name="Prust C."/>
            <person name="Hoffmeister M."/>
            <person name="Liesegang H."/>
            <person name="Wiezer A."/>
            <person name="Fricke W.F."/>
            <person name="Ehrenreich A."/>
            <person name="Gottschalk G."/>
            <person name="Deppenmeier U."/>
        </authorList>
    </citation>
    <scope>NUCLEOTIDE SEQUENCE [LARGE SCALE GENOMIC DNA]</scope>
    <source>
        <strain>621H</strain>
    </source>
</reference>
<proteinExistence type="inferred from homology"/>
<name>DNAJ_GLUOX</name>